<reference key="1">
    <citation type="journal article" date="2002" name="Nat. Genet.">
        <title>Genome sequence of the endocellular obligate symbiont of tsetse flies, Wigglesworthia glossinidia.</title>
        <authorList>
            <person name="Akman L."/>
            <person name="Yamashita A."/>
            <person name="Watanabe H."/>
            <person name="Oshima K."/>
            <person name="Shiba T."/>
            <person name="Hattori M."/>
            <person name="Aksoy S."/>
        </authorList>
    </citation>
    <scope>NUCLEOTIDE SEQUENCE [LARGE SCALE GENOMIC DNA]</scope>
</reference>
<accession>Q8D380</accession>
<gene>
    <name evidence="1" type="primary">ubiD</name>
    <name type="ordered locus">WIGBR1210</name>
</gene>
<dbReference type="EC" id="4.1.1.98" evidence="1"/>
<dbReference type="EMBL" id="BA000021">
    <property type="protein sequence ID" value="BAC24267.1"/>
    <property type="molecule type" value="Genomic_DNA"/>
</dbReference>
<dbReference type="SMR" id="Q8D380"/>
<dbReference type="STRING" id="36870.gene:10368600"/>
<dbReference type="KEGG" id="wbr:yigC"/>
<dbReference type="eggNOG" id="COG0043">
    <property type="taxonomic scope" value="Bacteria"/>
</dbReference>
<dbReference type="HOGENOM" id="CLU_023348_4_1_6"/>
<dbReference type="OrthoDB" id="9809841at2"/>
<dbReference type="UniPathway" id="UPA00232"/>
<dbReference type="Proteomes" id="UP000000562">
    <property type="component" value="Chromosome"/>
</dbReference>
<dbReference type="GO" id="GO:0005829">
    <property type="term" value="C:cytosol"/>
    <property type="evidence" value="ECO:0007669"/>
    <property type="project" value="TreeGrafter"/>
</dbReference>
<dbReference type="GO" id="GO:0005886">
    <property type="term" value="C:plasma membrane"/>
    <property type="evidence" value="ECO:0007669"/>
    <property type="project" value="UniProtKB-SubCell"/>
</dbReference>
<dbReference type="GO" id="GO:0008694">
    <property type="term" value="F:3-octaprenyl-4-hydroxybenzoate carboxy-lyase activity"/>
    <property type="evidence" value="ECO:0007669"/>
    <property type="project" value="UniProtKB-UniRule"/>
</dbReference>
<dbReference type="GO" id="GO:0046872">
    <property type="term" value="F:metal ion binding"/>
    <property type="evidence" value="ECO:0007669"/>
    <property type="project" value="UniProtKB-KW"/>
</dbReference>
<dbReference type="GO" id="GO:0006744">
    <property type="term" value="P:ubiquinone biosynthetic process"/>
    <property type="evidence" value="ECO:0007669"/>
    <property type="project" value="UniProtKB-UniRule"/>
</dbReference>
<dbReference type="FunFam" id="3.40.1670.10:FF:000001">
    <property type="entry name" value="3-octaprenyl-4-hydroxybenzoate carboxy-lyase"/>
    <property type="match status" value="1"/>
</dbReference>
<dbReference type="Gene3D" id="1.20.5.570">
    <property type="entry name" value="Single helix bin"/>
    <property type="match status" value="1"/>
</dbReference>
<dbReference type="Gene3D" id="3.40.1670.10">
    <property type="entry name" value="UbiD C-terminal domain-like"/>
    <property type="match status" value="1"/>
</dbReference>
<dbReference type="HAMAP" id="MF_01636">
    <property type="entry name" value="UbiD"/>
    <property type="match status" value="1"/>
</dbReference>
<dbReference type="InterPro" id="IPR002830">
    <property type="entry name" value="UbiD"/>
</dbReference>
<dbReference type="InterPro" id="IPR049381">
    <property type="entry name" value="UbiD-like_C"/>
</dbReference>
<dbReference type="InterPro" id="IPR049383">
    <property type="entry name" value="UbiD-like_N"/>
</dbReference>
<dbReference type="InterPro" id="IPR023677">
    <property type="entry name" value="UbiD_bacteria"/>
</dbReference>
<dbReference type="InterPro" id="IPR048304">
    <property type="entry name" value="UbiD_Rift_dom"/>
</dbReference>
<dbReference type="NCBIfam" id="NF008175">
    <property type="entry name" value="PRK10922.1"/>
    <property type="match status" value="1"/>
</dbReference>
<dbReference type="NCBIfam" id="TIGR00148">
    <property type="entry name" value="UbiD family decarboxylase"/>
    <property type="match status" value="1"/>
</dbReference>
<dbReference type="PANTHER" id="PTHR30108">
    <property type="entry name" value="3-OCTAPRENYL-4-HYDROXYBENZOATE CARBOXY-LYASE-RELATED"/>
    <property type="match status" value="1"/>
</dbReference>
<dbReference type="PANTHER" id="PTHR30108:SF17">
    <property type="entry name" value="FERULIC ACID DECARBOXYLASE 1"/>
    <property type="match status" value="1"/>
</dbReference>
<dbReference type="Pfam" id="PF01977">
    <property type="entry name" value="UbiD"/>
    <property type="match status" value="1"/>
</dbReference>
<dbReference type="Pfam" id="PF20696">
    <property type="entry name" value="UbiD_C"/>
    <property type="match status" value="1"/>
</dbReference>
<dbReference type="Pfam" id="PF20695">
    <property type="entry name" value="UbiD_N"/>
    <property type="match status" value="1"/>
</dbReference>
<dbReference type="SUPFAM" id="SSF50475">
    <property type="entry name" value="FMN-binding split barrel"/>
    <property type="match status" value="1"/>
</dbReference>
<dbReference type="SUPFAM" id="SSF143968">
    <property type="entry name" value="UbiD C-terminal domain-like"/>
    <property type="match status" value="1"/>
</dbReference>
<comment type="function">
    <text evidence="1">Catalyzes the decarboxylation of 3-octaprenyl-4-hydroxy benzoate to 2-octaprenylphenol, an intermediate step in ubiquinone biosynthesis.</text>
</comment>
<comment type="catalytic activity">
    <reaction evidence="1">
        <text>a 4-hydroxy-3-(all-trans-polyprenyl)benzoate + H(+) = a 2-(all-trans-polyprenyl)phenol + CO2</text>
        <dbReference type="Rhea" id="RHEA:41680"/>
        <dbReference type="Rhea" id="RHEA-COMP:9514"/>
        <dbReference type="Rhea" id="RHEA-COMP:9516"/>
        <dbReference type="ChEBI" id="CHEBI:1269"/>
        <dbReference type="ChEBI" id="CHEBI:15378"/>
        <dbReference type="ChEBI" id="CHEBI:16526"/>
        <dbReference type="ChEBI" id="CHEBI:78396"/>
        <dbReference type="EC" id="4.1.1.98"/>
    </reaction>
</comment>
<comment type="cofactor">
    <cofactor evidence="1">
        <name>prenylated FMN</name>
        <dbReference type="ChEBI" id="CHEBI:87746"/>
    </cofactor>
    <text evidence="1">Binds 1 prenylated FMN per subunit.</text>
</comment>
<comment type="cofactor">
    <cofactor evidence="1">
        <name>Mn(2+)</name>
        <dbReference type="ChEBI" id="CHEBI:29035"/>
    </cofactor>
</comment>
<comment type="pathway">
    <text evidence="1">Cofactor biosynthesis; ubiquinone biosynthesis.</text>
</comment>
<comment type="subunit">
    <text evidence="1">Homohexamer.</text>
</comment>
<comment type="subcellular location">
    <subcellularLocation>
        <location evidence="1">Cell membrane</location>
        <topology evidence="1">Peripheral membrane protein</topology>
    </subcellularLocation>
</comment>
<comment type="similarity">
    <text evidence="1">Belongs to the UbiD family.</text>
</comment>
<proteinExistence type="inferred from homology"/>
<name>UBID_WIGBR</name>
<evidence type="ECO:0000255" key="1">
    <source>
        <dbReference type="HAMAP-Rule" id="MF_01636"/>
    </source>
</evidence>
<organism>
    <name type="scientific">Wigglesworthia glossinidia brevipalpis</name>
    <dbReference type="NCBI Taxonomy" id="36870"/>
    <lineage>
        <taxon>Bacteria</taxon>
        <taxon>Pseudomonadati</taxon>
        <taxon>Pseudomonadota</taxon>
        <taxon>Gammaproteobacteria</taxon>
        <taxon>Enterobacterales</taxon>
        <taxon>Erwiniaceae</taxon>
        <taxon>Wigglesworthia</taxon>
    </lineage>
</organism>
<feature type="chain" id="PRO_0000267709" description="3-octaprenyl-4-hydroxybenzoate carboxy-lyase">
    <location>
        <begin position="1"/>
        <end position="489"/>
    </location>
</feature>
<feature type="active site" description="Proton donor" evidence="1">
    <location>
        <position position="288"/>
    </location>
</feature>
<feature type="binding site" evidence="1">
    <location>
        <position position="172"/>
    </location>
    <ligand>
        <name>Mn(2+)</name>
        <dbReference type="ChEBI" id="CHEBI:29035"/>
    </ligand>
</feature>
<feature type="binding site" evidence="1">
    <location>
        <begin position="175"/>
        <end position="177"/>
    </location>
    <ligand>
        <name>prenylated FMN</name>
        <dbReference type="ChEBI" id="CHEBI:87746"/>
    </ligand>
</feature>
<feature type="binding site" evidence="1">
    <location>
        <begin position="189"/>
        <end position="191"/>
    </location>
    <ligand>
        <name>prenylated FMN</name>
        <dbReference type="ChEBI" id="CHEBI:87746"/>
    </ligand>
</feature>
<feature type="binding site" evidence="1">
    <location>
        <begin position="194"/>
        <end position="195"/>
    </location>
    <ligand>
        <name>prenylated FMN</name>
        <dbReference type="ChEBI" id="CHEBI:87746"/>
    </ligand>
</feature>
<feature type="binding site" evidence="1">
    <location>
        <position position="240"/>
    </location>
    <ligand>
        <name>Mn(2+)</name>
        <dbReference type="ChEBI" id="CHEBI:29035"/>
    </ligand>
</feature>
<sequence length="489" mass="56153">MKYVCLRSFIKILEKHKKIKRIFVPISPNLEITEISHRTINKEGPALIFENPKGYKMPLLCNLFGTTERVAMAMGGKDIKYIRKLGKIISFLKTPEAPKNIKDILNIAPKFKAMLHMFTKKVNNAPCQEEIFSGSDVDLTSIPIMKCWPNDIGPLITWGLTITKGPYKKRQNIGVYRQQVIEKNKIIMRWLPHRGGALDFLSWKNSKKAYEDKFPVAIALGADPATILSAVTPIPDNLSEYSFAGLLRKNKTEVIKCISSDLEVPAYSEIILEGYLDDKIAEEGPYGDHTGYYNEIERFPILNITHITKRKDSLYHSTYTGKPIDEPSVIGMALNELFIPILQKQFPEIIDFYLPPECCSYRISVVSIKKQYLGHANQIMMGIWSILRQFMYTKFIIVCDDDIDIRNWKDIMWSISTRVDPYRDTLLIKNTPIDYLDFASEKKNLGSKIGIDATNKWPGETTRNWGVPIKMDKIIKDKIDLIWDDLNIF</sequence>
<protein>
    <recommendedName>
        <fullName evidence="1">3-octaprenyl-4-hydroxybenzoate carboxy-lyase</fullName>
        <ecNumber evidence="1">4.1.1.98</ecNumber>
    </recommendedName>
    <alternativeName>
        <fullName evidence="1">Polyprenyl p-hydroxybenzoate decarboxylase</fullName>
    </alternativeName>
</protein>
<keyword id="KW-1003">Cell membrane</keyword>
<keyword id="KW-0210">Decarboxylase</keyword>
<keyword id="KW-0285">Flavoprotein</keyword>
<keyword id="KW-0288">FMN</keyword>
<keyword id="KW-0456">Lyase</keyword>
<keyword id="KW-0464">Manganese</keyword>
<keyword id="KW-0472">Membrane</keyword>
<keyword id="KW-0479">Metal-binding</keyword>
<keyword id="KW-1185">Reference proteome</keyword>
<keyword id="KW-0831">Ubiquinone biosynthesis</keyword>